<comment type="function">
    <text evidence="1">Binds 23S rRNA and is also seen to make contacts with the A and possibly P site tRNAs.</text>
</comment>
<comment type="subunit">
    <text evidence="1">Part of the 50S ribosomal subunit.</text>
</comment>
<comment type="similarity">
    <text evidence="1">Belongs to the universal ribosomal protein uL16 family.</text>
</comment>
<gene>
    <name evidence="1" type="primary">rplP</name>
    <name type="ordered locus">Rsph17029_0368</name>
</gene>
<accession>A3PGL8</accession>
<proteinExistence type="inferred from homology"/>
<reference key="1">
    <citation type="submission" date="2007-02" db="EMBL/GenBank/DDBJ databases">
        <title>Complete sequence of chromosome 1 of Rhodobacter sphaeroides ATCC 17029.</title>
        <authorList>
            <person name="Copeland A."/>
            <person name="Lucas S."/>
            <person name="Lapidus A."/>
            <person name="Barry K."/>
            <person name="Detter J.C."/>
            <person name="Glavina del Rio T."/>
            <person name="Hammon N."/>
            <person name="Israni S."/>
            <person name="Dalin E."/>
            <person name="Tice H."/>
            <person name="Pitluck S."/>
            <person name="Kiss H."/>
            <person name="Brettin T."/>
            <person name="Bruce D."/>
            <person name="Han C."/>
            <person name="Tapia R."/>
            <person name="Gilna P."/>
            <person name="Schmutz J."/>
            <person name="Larimer F."/>
            <person name="Land M."/>
            <person name="Hauser L."/>
            <person name="Kyrpides N."/>
            <person name="Mikhailova N."/>
            <person name="Richardson P."/>
            <person name="Mackenzie C."/>
            <person name="Choudhary M."/>
            <person name="Donohue T.J."/>
            <person name="Kaplan S."/>
        </authorList>
    </citation>
    <scope>NUCLEOTIDE SEQUENCE [LARGE SCALE GENOMIC DNA]</scope>
    <source>
        <strain>ATCC 17029 / ATH 2.4.9</strain>
    </source>
</reference>
<name>RL16_CERS1</name>
<sequence length="137" mass="15609">MLQPKRTKFRKQHKGRIHGEAKGGFLLNFGGFGLKATEPERVTARQIEAARRAITRHMKRQGRVWIRVFPDVPVTSKPTEVRMGKGKGSVDYWAAKVKPGRIMFEIDGVSETIAREALRLGAMKLPVMTRIVVREDW</sequence>
<dbReference type="EMBL" id="CP000577">
    <property type="protein sequence ID" value="ABN75484.1"/>
    <property type="molecule type" value="Genomic_DNA"/>
</dbReference>
<dbReference type="RefSeq" id="WP_002722499.1">
    <property type="nucleotide sequence ID" value="NC_009049.1"/>
</dbReference>
<dbReference type="SMR" id="A3PGL8"/>
<dbReference type="GeneID" id="67445507"/>
<dbReference type="KEGG" id="rsh:Rsph17029_0368"/>
<dbReference type="HOGENOM" id="CLU_078858_2_1_5"/>
<dbReference type="GO" id="GO:0022625">
    <property type="term" value="C:cytosolic large ribosomal subunit"/>
    <property type="evidence" value="ECO:0007669"/>
    <property type="project" value="TreeGrafter"/>
</dbReference>
<dbReference type="GO" id="GO:0019843">
    <property type="term" value="F:rRNA binding"/>
    <property type="evidence" value="ECO:0007669"/>
    <property type="project" value="UniProtKB-UniRule"/>
</dbReference>
<dbReference type="GO" id="GO:0003735">
    <property type="term" value="F:structural constituent of ribosome"/>
    <property type="evidence" value="ECO:0007669"/>
    <property type="project" value="InterPro"/>
</dbReference>
<dbReference type="GO" id="GO:0000049">
    <property type="term" value="F:tRNA binding"/>
    <property type="evidence" value="ECO:0007669"/>
    <property type="project" value="UniProtKB-KW"/>
</dbReference>
<dbReference type="GO" id="GO:0006412">
    <property type="term" value="P:translation"/>
    <property type="evidence" value="ECO:0007669"/>
    <property type="project" value="UniProtKB-UniRule"/>
</dbReference>
<dbReference type="CDD" id="cd01433">
    <property type="entry name" value="Ribosomal_L16_L10e"/>
    <property type="match status" value="1"/>
</dbReference>
<dbReference type="FunFam" id="3.90.1170.10:FF:000001">
    <property type="entry name" value="50S ribosomal protein L16"/>
    <property type="match status" value="1"/>
</dbReference>
<dbReference type="Gene3D" id="3.90.1170.10">
    <property type="entry name" value="Ribosomal protein L10e/L16"/>
    <property type="match status" value="1"/>
</dbReference>
<dbReference type="HAMAP" id="MF_01342">
    <property type="entry name" value="Ribosomal_uL16"/>
    <property type="match status" value="1"/>
</dbReference>
<dbReference type="InterPro" id="IPR047873">
    <property type="entry name" value="Ribosomal_uL16"/>
</dbReference>
<dbReference type="InterPro" id="IPR000114">
    <property type="entry name" value="Ribosomal_uL16_bact-type"/>
</dbReference>
<dbReference type="InterPro" id="IPR020798">
    <property type="entry name" value="Ribosomal_uL16_CS"/>
</dbReference>
<dbReference type="InterPro" id="IPR016180">
    <property type="entry name" value="Ribosomal_uL16_dom"/>
</dbReference>
<dbReference type="InterPro" id="IPR036920">
    <property type="entry name" value="Ribosomal_uL16_sf"/>
</dbReference>
<dbReference type="NCBIfam" id="TIGR01164">
    <property type="entry name" value="rplP_bact"/>
    <property type="match status" value="1"/>
</dbReference>
<dbReference type="PANTHER" id="PTHR12220">
    <property type="entry name" value="50S/60S RIBOSOMAL PROTEIN L16"/>
    <property type="match status" value="1"/>
</dbReference>
<dbReference type="PANTHER" id="PTHR12220:SF13">
    <property type="entry name" value="LARGE RIBOSOMAL SUBUNIT PROTEIN UL16M"/>
    <property type="match status" value="1"/>
</dbReference>
<dbReference type="Pfam" id="PF00252">
    <property type="entry name" value="Ribosomal_L16"/>
    <property type="match status" value="1"/>
</dbReference>
<dbReference type="PRINTS" id="PR00060">
    <property type="entry name" value="RIBOSOMALL16"/>
</dbReference>
<dbReference type="SUPFAM" id="SSF54686">
    <property type="entry name" value="Ribosomal protein L16p/L10e"/>
    <property type="match status" value="1"/>
</dbReference>
<dbReference type="PROSITE" id="PS00586">
    <property type="entry name" value="RIBOSOMAL_L16_1"/>
    <property type="match status" value="1"/>
</dbReference>
<dbReference type="PROSITE" id="PS00701">
    <property type="entry name" value="RIBOSOMAL_L16_2"/>
    <property type="match status" value="1"/>
</dbReference>
<feature type="chain" id="PRO_1000054689" description="Large ribosomal subunit protein uL16">
    <location>
        <begin position="1"/>
        <end position="137"/>
    </location>
</feature>
<keyword id="KW-0687">Ribonucleoprotein</keyword>
<keyword id="KW-0689">Ribosomal protein</keyword>
<keyword id="KW-0694">RNA-binding</keyword>
<keyword id="KW-0699">rRNA-binding</keyword>
<keyword id="KW-0820">tRNA-binding</keyword>
<protein>
    <recommendedName>
        <fullName evidence="1">Large ribosomal subunit protein uL16</fullName>
    </recommendedName>
    <alternativeName>
        <fullName evidence="2">50S ribosomal protein L16</fullName>
    </alternativeName>
</protein>
<evidence type="ECO:0000255" key="1">
    <source>
        <dbReference type="HAMAP-Rule" id="MF_01342"/>
    </source>
</evidence>
<evidence type="ECO:0000305" key="2"/>
<organism>
    <name type="scientific">Cereibacter sphaeroides (strain ATCC 17029 / ATH 2.4.9)</name>
    <name type="common">Rhodobacter sphaeroides</name>
    <dbReference type="NCBI Taxonomy" id="349101"/>
    <lineage>
        <taxon>Bacteria</taxon>
        <taxon>Pseudomonadati</taxon>
        <taxon>Pseudomonadota</taxon>
        <taxon>Alphaproteobacteria</taxon>
        <taxon>Rhodobacterales</taxon>
        <taxon>Paracoccaceae</taxon>
        <taxon>Cereibacter</taxon>
    </lineage>
</organism>